<name>FBPC_FUSNN</name>
<accession>Q8RGC8</accession>
<evidence type="ECO:0000255" key="1">
    <source>
        <dbReference type="HAMAP-Rule" id="MF_01706"/>
    </source>
</evidence>
<gene>
    <name evidence="1" type="primary">fbpC</name>
    <name type="ordered locus">FN0376</name>
</gene>
<protein>
    <recommendedName>
        <fullName evidence="1">Fe(3+) ions import ATP-binding protein FbpC</fullName>
        <ecNumber evidence="1">7.2.2.7</ecNumber>
    </recommendedName>
</protein>
<keyword id="KW-0067">ATP-binding</keyword>
<keyword id="KW-0997">Cell inner membrane</keyword>
<keyword id="KW-1003">Cell membrane</keyword>
<keyword id="KW-0406">Ion transport</keyword>
<keyword id="KW-0408">Iron</keyword>
<keyword id="KW-0410">Iron transport</keyword>
<keyword id="KW-0472">Membrane</keyword>
<keyword id="KW-0547">Nucleotide-binding</keyword>
<keyword id="KW-1185">Reference proteome</keyword>
<keyword id="KW-1278">Translocase</keyword>
<keyword id="KW-0813">Transport</keyword>
<dbReference type="EC" id="7.2.2.7" evidence="1"/>
<dbReference type="EMBL" id="AE009951">
    <property type="protein sequence ID" value="AAL94579.1"/>
    <property type="molecule type" value="Genomic_DNA"/>
</dbReference>
<dbReference type="RefSeq" id="NP_603280.1">
    <property type="nucleotide sequence ID" value="NC_003454.1"/>
</dbReference>
<dbReference type="RefSeq" id="WP_005902588.1">
    <property type="nucleotide sequence ID" value="NZ_OZ209243.1"/>
</dbReference>
<dbReference type="SMR" id="Q8RGC8"/>
<dbReference type="FunCoup" id="Q8RGC8">
    <property type="interactions" value="328"/>
</dbReference>
<dbReference type="STRING" id="190304.FN0376"/>
<dbReference type="PaxDb" id="190304-FN0376"/>
<dbReference type="EnsemblBacteria" id="AAL94579">
    <property type="protein sequence ID" value="AAL94579"/>
    <property type="gene ID" value="FN0376"/>
</dbReference>
<dbReference type="KEGG" id="fnu:FN0376"/>
<dbReference type="PATRIC" id="fig|190304.8.peg.952"/>
<dbReference type="eggNOG" id="COG3842">
    <property type="taxonomic scope" value="Bacteria"/>
</dbReference>
<dbReference type="HOGENOM" id="CLU_000604_1_1_0"/>
<dbReference type="InParanoid" id="Q8RGC8"/>
<dbReference type="BioCyc" id="FNUC190304:G1FZS-972-MONOMER"/>
<dbReference type="Proteomes" id="UP000002521">
    <property type="component" value="Chromosome"/>
</dbReference>
<dbReference type="GO" id="GO:0043190">
    <property type="term" value="C:ATP-binding cassette (ABC) transporter complex"/>
    <property type="evidence" value="ECO:0007669"/>
    <property type="project" value="InterPro"/>
</dbReference>
<dbReference type="GO" id="GO:0005886">
    <property type="term" value="C:plasma membrane"/>
    <property type="evidence" value="ECO:0000318"/>
    <property type="project" value="GO_Central"/>
</dbReference>
<dbReference type="GO" id="GO:0015408">
    <property type="term" value="F:ABC-type ferric iron transporter activity"/>
    <property type="evidence" value="ECO:0007669"/>
    <property type="project" value="UniProtKB-EC"/>
</dbReference>
<dbReference type="GO" id="GO:0005524">
    <property type="term" value="F:ATP binding"/>
    <property type="evidence" value="ECO:0007669"/>
    <property type="project" value="UniProtKB-KW"/>
</dbReference>
<dbReference type="GO" id="GO:0016887">
    <property type="term" value="F:ATP hydrolysis activity"/>
    <property type="evidence" value="ECO:0007669"/>
    <property type="project" value="InterPro"/>
</dbReference>
<dbReference type="GO" id="GO:0022857">
    <property type="term" value="F:transmembrane transporter activity"/>
    <property type="evidence" value="ECO:0000318"/>
    <property type="project" value="GO_Central"/>
</dbReference>
<dbReference type="GO" id="GO:0055085">
    <property type="term" value="P:transmembrane transport"/>
    <property type="evidence" value="ECO:0000318"/>
    <property type="project" value="GO_Central"/>
</dbReference>
<dbReference type="FunFam" id="3.40.50.300:FF:000042">
    <property type="entry name" value="Maltose/maltodextrin ABC transporter, ATP-binding protein"/>
    <property type="match status" value="1"/>
</dbReference>
<dbReference type="Gene3D" id="2.40.50.100">
    <property type="match status" value="1"/>
</dbReference>
<dbReference type="Gene3D" id="2.40.50.140">
    <property type="entry name" value="Nucleic acid-binding proteins"/>
    <property type="match status" value="1"/>
</dbReference>
<dbReference type="Gene3D" id="3.40.50.300">
    <property type="entry name" value="P-loop containing nucleotide triphosphate hydrolases"/>
    <property type="match status" value="1"/>
</dbReference>
<dbReference type="InterPro" id="IPR003593">
    <property type="entry name" value="AAA+_ATPase"/>
</dbReference>
<dbReference type="InterPro" id="IPR050093">
    <property type="entry name" value="ABC_SmlMolc_Importer"/>
</dbReference>
<dbReference type="InterPro" id="IPR003439">
    <property type="entry name" value="ABC_transporter-like_ATP-bd"/>
</dbReference>
<dbReference type="InterPro" id="IPR017871">
    <property type="entry name" value="ABC_transporter-like_CS"/>
</dbReference>
<dbReference type="InterPro" id="IPR008995">
    <property type="entry name" value="Mo/tungstate-bd_C_term_dom"/>
</dbReference>
<dbReference type="InterPro" id="IPR012340">
    <property type="entry name" value="NA-bd_OB-fold"/>
</dbReference>
<dbReference type="InterPro" id="IPR027417">
    <property type="entry name" value="P-loop_NTPase"/>
</dbReference>
<dbReference type="InterPro" id="IPR013611">
    <property type="entry name" value="Transp-assoc_OB_typ2"/>
</dbReference>
<dbReference type="PANTHER" id="PTHR42781">
    <property type="entry name" value="SPERMIDINE/PUTRESCINE IMPORT ATP-BINDING PROTEIN POTA"/>
    <property type="match status" value="1"/>
</dbReference>
<dbReference type="PANTHER" id="PTHR42781:SF4">
    <property type="entry name" value="SPERMIDINE_PUTRESCINE IMPORT ATP-BINDING PROTEIN POTA"/>
    <property type="match status" value="1"/>
</dbReference>
<dbReference type="Pfam" id="PF00005">
    <property type="entry name" value="ABC_tran"/>
    <property type="match status" value="1"/>
</dbReference>
<dbReference type="Pfam" id="PF08402">
    <property type="entry name" value="TOBE_2"/>
    <property type="match status" value="1"/>
</dbReference>
<dbReference type="SMART" id="SM00382">
    <property type="entry name" value="AAA"/>
    <property type="match status" value="1"/>
</dbReference>
<dbReference type="SUPFAM" id="SSF50331">
    <property type="entry name" value="MOP-like"/>
    <property type="match status" value="1"/>
</dbReference>
<dbReference type="SUPFAM" id="SSF52540">
    <property type="entry name" value="P-loop containing nucleoside triphosphate hydrolases"/>
    <property type="match status" value="1"/>
</dbReference>
<dbReference type="PROSITE" id="PS00211">
    <property type="entry name" value="ABC_TRANSPORTER_1"/>
    <property type="match status" value="1"/>
</dbReference>
<dbReference type="PROSITE" id="PS50893">
    <property type="entry name" value="ABC_TRANSPORTER_2"/>
    <property type="match status" value="1"/>
</dbReference>
<dbReference type="PROSITE" id="PS51242">
    <property type="entry name" value="FBPC"/>
    <property type="match status" value="1"/>
</dbReference>
<proteinExistence type="inferred from homology"/>
<sequence length="371" mass="41843">MSVNIKIENAQKRYGDNIIIENLSLDIKQGEFFTLLGPSGCGKTTLLRMIAGFNSIEKGNFYFNEKRINDLDPAKRNIGMVFQNYAIFPHLTVEQNVEFGLKNRKVSKEEMKIEIDKFLKLMQIDEYKDRMPERLSGGQQQRVALARALVIKPDVLLMDEPLSNLDAKLRVEMRTAIKEIQNSIGITTVYVTHDQEEAMAVSDRIAVMKDGEIQHLGQPKDIYQRPANLFVATFIGKTNVLKGNLNGSILKVAGKYEVSLNNIKDKNIKGNVVISIRPEEFVIDENQTKDGMRAFIDSSVFLGLNTHYFAHLESGEKIEIVQESKIDSIIPKGAEVYLKVKQDKINVFTEDGSRNILEGVNNDAIGVAYVK</sequence>
<reference key="1">
    <citation type="journal article" date="2002" name="J. Bacteriol.">
        <title>Genome sequence and analysis of the oral bacterium Fusobacterium nucleatum strain ATCC 25586.</title>
        <authorList>
            <person name="Kapatral V."/>
            <person name="Anderson I."/>
            <person name="Ivanova N."/>
            <person name="Reznik G."/>
            <person name="Los T."/>
            <person name="Lykidis A."/>
            <person name="Bhattacharyya A."/>
            <person name="Bartman A."/>
            <person name="Gardner W."/>
            <person name="Grechkin G."/>
            <person name="Zhu L."/>
            <person name="Vasieva O."/>
            <person name="Chu L."/>
            <person name="Kogan Y."/>
            <person name="Chaga O."/>
            <person name="Goltsman E."/>
            <person name="Bernal A."/>
            <person name="Larsen N."/>
            <person name="D'Souza M."/>
            <person name="Walunas T."/>
            <person name="Pusch G."/>
            <person name="Haselkorn R."/>
            <person name="Fonstein M."/>
            <person name="Kyrpides N.C."/>
            <person name="Overbeek R."/>
        </authorList>
    </citation>
    <scope>NUCLEOTIDE SEQUENCE [LARGE SCALE GENOMIC DNA]</scope>
    <source>
        <strain>ATCC 25586 / DSM 15643 / BCRC 10681 / CIP 101130 / JCM 8532 / KCTC 2640 / LMG 13131 / VPI 4355</strain>
    </source>
</reference>
<organism>
    <name type="scientific">Fusobacterium nucleatum subsp. nucleatum (strain ATCC 25586 / DSM 15643 / BCRC 10681 / CIP 101130 / JCM 8532 / KCTC 2640 / LMG 13131 / VPI 4355)</name>
    <dbReference type="NCBI Taxonomy" id="190304"/>
    <lineage>
        <taxon>Bacteria</taxon>
        <taxon>Fusobacteriati</taxon>
        <taxon>Fusobacteriota</taxon>
        <taxon>Fusobacteriia</taxon>
        <taxon>Fusobacteriales</taxon>
        <taxon>Fusobacteriaceae</taxon>
        <taxon>Fusobacterium</taxon>
    </lineage>
</organism>
<feature type="chain" id="PRO_0000092351" description="Fe(3+) ions import ATP-binding protein FbpC">
    <location>
        <begin position="1"/>
        <end position="371"/>
    </location>
</feature>
<feature type="domain" description="ABC transporter" evidence="1">
    <location>
        <begin position="5"/>
        <end position="235"/>
    </location>
</feature>
<feature type="binding site" evidence="1">
    <location>
        <begin position="37"/>
        <end position="44"/>
    </location>
    <ligand>
        <name>ATP</name>
        <dbReference type="ChEBI" id="CHEBI:30616"/>
    </ligand>
</feature>
<comment type="function">
    <text evidence="1">Part of the ABC transporter complex FbpABC involved in Fe(3+) ions import. Responsible for energy coupling to the transport system.</text>
</comment>
<comment type="catalytic activity">
    <reaction evidence="1">
        <text>Fe(3+)(out) + ATP + H2O = Fe(3+)(in) + ADP + phosphate + H(+)</text>
        <dbReference type="Rhea" id="RHEA:12332"/>
        <dbReference type="ChEBI" id="CHEBI:15377"/>
        <dbReference type="ChEBI" id="CHEBI:15378"/>
        <dbReference type="ChEBI" id="CHEBI:29034"/>
        <dbReference type="ChEBI" id="CHEBI:30616"/>
        <dbReference type="ChEBI" id="CHEBI:43474"/>
        <dbReference type="ChEBI" id="CHEBI:456216"/>
        <dbReference type="EC" id="7.2.2.7"/>
    </reaction>
</comment>
<comment type="subunit">
    <text evidence="1">The complex is composed of two ATP-binding proteins (FbpC), two transmembrane proteins (FbpB) and a solute-binding protein (FbpA).</text>
</comment>
<comment type="subcellular location">
    <subcellularLocation>
        <location evidence="1">Cell inner membrane</location>
        <topology evidence="1">Peripheral membrane protein</topology>
    </subcellularLocation>
</comment>
<comment type="similarity">
    <text evidence="1">Belongs to the ABC transporter superfamily. Fe(3+) ion importer (TC 3.A.1.10) family.</text>
</comment>